<gene>
    <name evidence="1" type="primary">nuoD</name>
    <name type="ordered locus">C8J_1473</name>
</gene>
<organism>
    <name type="scientific">Campylobacter jejuni subsp. jejuni serotype O:6 (strain 81116 / NCTC 11828)</name>
    <dbReference type="NCBI Taxonomy" id="407148"/>
    <lineage>
        <taxon>Bacteria</taxon>
        <taxon>Pseudomonadati</taxon>
        <taxon>Campylobacterota</taxon>
        <taxon>Epsilonproteobacteria</taxon>
        <taxon>Campylobacterales</taxon>
        <taxon>Campylobacteraceae</taxon>
        <taxon>Campylobacter</taxon>
    </lineage>
</organism>
<reference key="1">
    <citation type="journal article" date="2007" name="J. Bacteriol.">
        <title>The complete genome sequence of Campylobacter jejuni strain 81116 (NCTC11828).</title>
        <authorList>
            <person name="Pearson B.M."/>
            <person name="Gaskin D.J.H."/>
            <person name="Segers R.P.A.M."/>
            <person name="Wells J.M."/>
            <person name="Nuijten P.J.M."/>
            <person name="van Vliet A.H.M."/>
        </authorList>
    </citation>
    <scope>NUCLEOTIDE SEQUENCE [LARGE SCALE GENOMIC DNA]</scope>
    <source>
        <strain>81116 / NCTC 11828</strain>
    </source>
</reference>
<keyword id="KW-0997">Cell inner membrane</keyword>
<keyword id="KW-1003">Cell membrane</keyword>
<keyword id="KW-0472">Membrane</keyword>
<keyword id="KW-0520">NAD</keyword>
<keyword id="KW-0874">Quinone</keyword>
<keyword id="KW-1278">Translocase</keyword>
<keyword id="KW-0813">Transport</keyword>
<keyword id="KW-0830">Ubiquinone</keyword>
<name>NUOD_CAMJ8</name>
<feature type="chain" id="PRO_0000371849" description="NADH-quinone oxidoreductase subunit D">
    <location>
        <begin position="1"/>
        <end position="408"/>
    </location>
</feature>
<dbReference type="EC" id="7.1.1.-" evidence="1"/>
<dbReference type="EMBL" id="CP000814">
    <property type="protein sequence ID" value="ABV53071.1"/>
    <property type="molecule type" value="Genomic_DNA"/>
</dbReference>
<dbReference type="RefSeq" id="WP_002866864.1">
    <property type="nucleotide sequence ID" value="NC_009839.1"/>
</dbReference>
<dbReference type="SMR" id="A8FNN4"/>
<dbReference type="KEGG" id="cju:C8J_1473"/>
<dbReference type="HOGENOM" id="CLU_015134_1_2_7"/>
<dbReference type="GO" id="GO:0005886">
    <property type="term" value="C:plasma membrane"/>
    <property type="evidence" value="ECO:0007669"/>
    <property type="project" value="UniProtKB-SubCell"/>
</dbReference>
<dbReference type="GO" id="GO:0051287">
    <property type="term" value="F:NAD binding"/>
    <property type="evidence" value="ECO:0007669"/>
    <property type="project" value="InterPro"/>
</dbReference>
<dbReference type="GO" id="GO:0050136">
    <property type="term" value="F:NADH:ubiquinone reductase (non-electrogenic) activity"/>
    <property type="evidence" value="ECO:0007669"/>
    <property type="project" value="UniProtKB-UniRule"/>
</dbReference>
<dbReference type="GO" id="GO:0048038">
    <property type="term" value="F:quinone binding"/>
    <property type="evidence" value="ECO:0007669"/>
    <property type="project" value="UniProtKB-KW"/>
</dbReference>
<dbReference type="Gene3D" id="1.10.645.10">
    <property type="entry name" value="Cytochrome-c3 Hydrogenase, chain B"/>
    <property type="match status" value="1"/>
</dbReference>
<dbReference type="HAMAP" id="MF_01358">
    <property type="entry name" value="NDH1_NuoD"/>
    <property type="match status" value="1"/>
</dbReference>
<dbReference type="InterPro" id="IPR001135">
    <property type="entry name" value="NADH_Q_OxRdtase_suD"/>
</dbReference>
<dbReference type="InterPro" id="IPR022885">
    <property type="entry name" value="NDH1_su_D/H"/>
</dbReference>
<dbReference type="InterPro" id="IPR029014">
    <property type="entry name" value="NiFe-Hase_large"/>
</dbReference>
<dbReference type="NCBIfam" id="TIGR01962">
    <property type="entry name" value="NuoD"/>
    <property type="match status" value="1"/>
</dbReference>
<dbReference type="NCBIfam" id="NF004739">
    <property type="entry name" value="PRK06075.1"/>
    <property type="match status" value="1"/>
</dbReference>
<dbReference type="PANTHER" id="PTHR11993:SF10">
    <property type="entry name" value="NADH DEHYDROGENASE [UBIQUINONE] IRON-SULFUR PROTEIN 2, MITOCHONDRIAL"/>
    <property type="match status" value="1"/>
</dbReference>
<dbReference type="PANTHER" id="PTHR11993">
    <property type="entry name" value="NADH-UBIQUINONE OXIDOREDUCTASE 49 KDA SUBUNIT"/>
    <property type="match status" value="1"/>
</dbReference>
<dbReference type="Pfam" id="PF00346">
    <property type="entry name" value="Complex1_49kDa"/>
    <property type="match status" value="1"/>
</dbReference>
<dbReference type="SUPFAM" id="SSF56762">
    <property type="entry name" value="HydB/Nqo4-like"/>
    <property type="match status" value="1"/>
</dbReference>
<comment type="function">
    <text evidence="1">NDH-1 shuttles electrons from NADH, via FMN and iron-sulfur (Fe-S) centers, to quinones in the respiratory chain. The immediate electron acceptor for the enzyme in this species is believed to be ubiquinone. Couples the redox reaction to proton translocation (for every two electrons transferred, four hydrogen ions are translocated across the cytoplasmic membrane), and thus conserves the redox energy in a proton gradient.</text>
</comment>
<comment type="catalytic activity">
    <reaction evidence="1">
        <text>a quinone + NADH + 5 H(+)(in) = a quinol + NAD(+) + 4 H(+)(out)</text>
        <dbReference type="Rhea" id="RHEA:57888"/>
        <dbReference type="ChEBI" id="CHEBI:15378"/>
        <dbReference type="ChEBI" id="CHEBI:24646"/>
        <dbReference type="ChEBI" id="CHEBI:57540"/>
        <dbReference type="ChEBI" id="CHEBI:57945"/>
        <dbReference type="ChEBI" id="CHEBI:132124"/>
    </reaction>
</comment>
<comment type="subunit">
    <text evidence="1">NDH-1 is composed of 14 different subunits. Subunits NuoB, C, D, E, F, and G constitute the peripheral sector of the complex.</text>
</comment>
<comment type="subcellular location">
    <subcellularLocation>
        <location evidence="1">Cell inner membrane</location>
        <topology evidence="1">Peripheral membrane protein</topology>
        <orientation evidence="1">Cytoplasmic side</orientation>
    </subcellularLocation>
</comment>
<comment type="similarity">
    <text evidence="1">Belongs to the complex I 49 kDa subunit family.</text>
</comment>
<proteinExistence type="inferred from homology"/>
<accession>A8FNN4</accession>
<sequence>MQIPSKLKPYYENIAFEQEDSKMIINLGPQHPSAHGNLRLILELDGEQVVKARPCIGYMHRGMEKMAENMIYQEFIPTTDRMDYIAASANNYAYCAAVEKLCGLEIPRRAAVIRMILLELNRIASHLLWLATHALDIGAMSVFLYCFREREYVLDLIEKYCGARLTHSSMRIGGVMLDLPENYLEEMLVFCDKFPNDLKDYEDLLDDNRIWRLRTENVGVVTKEQALNWGCTGVMLRGSGIKYDIRKEEPYLLYNEVEFGVPYATQGDSYARYKVYMQEFRESLKILRQCATLYKDTPPEILATHPEYVSASKEQILTQNYSLMQHFVLITQGLKPPKGEVYVPTESPKGELGFFIHSDGTGRPYRLKARTPSYWHCAFFEEMLVGTYLADVVAIMGNVNIVLGEIDR</sequence>
<protein>
    <recommendedName>
        <fullName evidence="1">NADH-quinone oxidoreductase subunit D</fullName>
        <ecNumber evidence="1">7.1.1.-</ecNumber>
    </recommendedName>
    <alternativeName>
        <fullName evidence="1">NADH dehydrogenase I subunit D</fullName>
    </alternativeName>
    <alternativeName>
        <fullName evidence="1">NDH-1 subunit D</fullName>
    </alternativeName>
</protein>
<evidence type="ECO:0000255" key="1">
    <source>
        <dbReference type="HAMAP-Rule" id="MF_01358"/>
    </source>
</evidence>